<organism>
    <name type="scientific">Tropheryma whipplei (strain TW08/27)</name>
    <name type="common">Whipple's bacillus</name>
    <dbReference type="NCBI Taxonomy" id="218496"/>
    <lineage>
        <taxon>Bacteria</taxon>
        <taxon>Bacillati</taxon>
        <taxon>Actinomycetota</taxon>
        <taxon>Actinomycetes</taxon>
        <taxon>Micrococcales</taxon>
        <taxon>Tropherymataceae</taxon>
        <taxon>Tropheryma</taxon>
    </lineage>
</organism>
<reference key="1">
    <citation type="journal article" date="2003" name="Lancet">
        <title>Sequencing and analysis of the genome of the Whipple's disease bacterium Tropheryma whipplei.</title>
        <authorList>
            <person name="Bentley S.D."/>
            <person name="Maiwald M."/>
            <person name="Murphy L.D."/>
            <person name="Pallen M.J."/>
            <person name="Yeats C.A."/>
            <person name="Dover L.G."/>
            <person name="Norbertczak H.T."/>
            <person name="Besra G.S."/>
            <person name="Quail M.A."/>
            <person name="Harris D.E."/>
            <person name="von Herbay A."/>
            <person name="Goble A."/>
            <person name="Rutter S."/>
            <person name="Squares R."/>
            <person name="Squares S."/>
            <person name="Barrell B.G."/>
            <person name="Parkhill J."/>
            <person name="Relman D.A."/>
        </authorList>
    </citation>
    <scope>NUCLEOTIDE SEQUENCE [LARGE SCALE GENOMIC DNA]</scope>
    <source>
        <strain>TW08/27</strain>
    </source>
</reference>
<evidence type="ECO:0000255" key="1">
    <source>
        <dbReference type="HAMAP-Rule" id="MF_00086"/>
    </source>
</evidence>
<keyword id="KW-0067">ATP-binding</keyword>
<keyword id="KW-0963">Cytoplasm</keyword>
<keyword id="KW-0460">Magnesium</keyword>
<keyword id="KW-0479">Metal-binding</keyword>
<keyword id="KW-0547">Nucleotide-binding</keyword>
<keyword id="KW-0554">One-carbon metabolism</keyword>
<keyword id="KW-0630">Potassium</keyword>
<keyword id="KW-0808">Transferase</keyword>
<comment type="function">
    <text evidence="1">Catalyzes the formation of S-adenosylmethionine (AdoMet) from methionine and ATP. The overall synthetic reaction is composed of two sequential steps, AdoMet formation and the subsequent tripolyphosphate hydrolysis which occurs prior to release of AdoMet from the enzyme.</text>
</comment>
<comment type="catalytic activity">
    <reaction evidence="1">
        <text>L-methionine + ATP + H2O = S-adenosyl-L-methionine + phosphate + diphosphate</text>
        <dbReference type="Rhea" id="RHEA:21080"/>
        <dbReference type="ChEBI" id="CHEBI:15377"/>
        <dbReference type="ChEBI" id="CHEBI:30616"/>
        <dbReference type="ChEBI" id="CHEBI:33019"/>
        <dbReference type="ChEBI" id="CHEBI:43474"/>
        <dbReference type="ChEBI" id="CHEBI:57844"/>
        <dbReference type="ChEBI" id="CHEBI:59789"/>
        <dbReference type="EC" id="2.5.1.6"/>
    </reaction>
</comment>
<comment type="cofactor">
    <cofactor evidence="1">
        <name>Mg(2+)</name>
        <dbReference type="ChEBI" id="CHEBI:18420"/>
    </cofactor>
    <text evidence="1">Binds 2 divalent ions per subunit.</text>
</comment>
<comment type="cofactor">
    <cofactor evidence="1">
        <name>K(+)</name>
        <dbReference type="ChEBI" id="CHEBI:29103"/>
    </cofactor>
    <text evidence="1">Binds 1 potassium ion per subunit.</text>
</comment>
<comment type="pathway">
    <text evidence="1">Amino-acid biosynthesis; S-adenosyl-L-methionine biosynthesis; S-adenosyl-L-methionine from L-methionine: step 1/1.</text>
</comment>
<comment type="subunit">
    <text evidence="1">Homotetramer; dimer of dimers.</text>
</comment>
<comment type="subcellular location">
    <subcellularLocation>
        <location evidence="1">Cytoplasm</location>
    </subcellularLocation>
</comment>
<comment type="similarity">
    <text evidence="1">Belongs to the AdoMet synthase family.</text>
</comment>
<protein>
    <recommendedName>
        <fullName evidence="1">S-adenosylmethionine synthase</fullName>
        <shortName evidence="1">AdoMet synthase</shortName>
        <ecNumber evidence="1">2.5.1.6</ecNumber>
    </recommendedName>
    <alternativeName>
        <fullName evidence="1">MAT</fullName>
    </alternativeName>
    <alternativeName>
        <fullName evidence="1">Methionine adenosyltransferase</fullName>
    </alternativeName>
</protein>
<gene>
    <name evidence="1" type="primary">metK</name>
    <name type="ordered locus">TW409</name>
</gene>
<accession>Q83HT7</accession>
<dbReference type="EC" id="2.5.1.6" evidence="1"/>
<dbReference type="EMBL" id="BX251411">
    <property type="protein sequence ID" value="CAD67080.1"/>
    <property type="molecule type" value="Genomic_DNA"/>
</dbReference>
<dbReference type="RefSeq" id="WP_011096360.1">
    <property type="nucleotide sequence ID" value="NC_004551.1"/>
</dbReference>
<dbReference type="SMR" id="Q83HT7"/>
<dbReference type="GeneID" id="67388187"/>
<dbReference type="KEGG" id="tws:TW409"/>
<dbReference type="HOGENOM" id="CLU_041802_1_1_11"/>
<dbReference type="UniPathway" id="UPA00315">
    <property type="reaction ID" value="UER00080"/>
</dbReference>
<dbReference type="GO" id="GO:0005737">
    <property type="term" value="C:cytoplasm"/>
    <property type="evidence" value="ECO:0007669"/>
    <property type="project" value="UniProtKB-SubCell"/>
</dbReference>
<dbReference type="GO" id="GO:0005524">
    <property type="term" value="F:ATP binding"/>
    <property type="evidence" value="ECO:0007669"/>
    <property type="project" value="UniProtKB-UniRule"/>
</dbReference>
<dbReference type="GO" id="GO:0000287">
    <property type="term" value="F:magnesium ion binding"/>
    <property type="evidence" value="ECO:0007669"/>
    <property type="project" value="UniProtKB-UniRule"/>
</dbReference>
<dbReference type="GO" id="GO:0004478">
    <property type="term" value="F:methionine adenosyltransferase activity"/>
    <property type="evidence" value="ECO:0007669"/>
    <property type="project" value="UniProtKB-UniRule"/>
</dbReference>
<dbReference type="GO" id="GO:0006730">
    <property type="term" value="P:one-carbon metabolic process"/>
    <property type="evidence" value="ECO:0007669"/>
    <property type="project" value="UniProtKB-KW"/>
</dbReference>
<dbReference type="GO" id="GO:0006556">
    <property type="term" value="P:S-adenosylmethionine biosynthetic process"/>
    <property type="evidence" value="ECO:0007669"/>
    <property type="project" value="UniProtKB-UniRule"/>
</dbReference>
<dbReference type="CDD" id="cd18079">
    <property type="entry name" value="S-AdoMet_synt"/>
    <property type="match status" value="1"/>
</dbReference>
<dbReference type="FunFam" id="3.30.300.10:FF:000003">
    <property type="entry name" value="S-adenosylmethionine synthase"/>
    <property type="match status" value="1"/>
</dbReference>
<dbReference type="Gene3D" id="3.30.300.10">
    <property type="match status" value="3"/>
</dbReference>
<dbReference type="HAMAP" id="MF_00086">
    <property type="entry name" value="S_AdoMet_synth1"/>
    <property type="match status" value="1"/>
</dbReference>
<dbReference type="InterPro" id="IPR022631">
    <property type="entry name" value="ADOMET_SYNTHASE_CS"/>
</dbReference>
<dbReference type="InterPro" id="IPR022630">
    <property type="entry name" value="S-AdoMet_synt_C"/>
</dbReference>
<dbReference type="InterPro" id="IPR022629">
    <property type="entry name" value="S-AdoMet_synt_central"/>
</dbReference>
<dbReference type="InterPro" id="IPR022628">
    <property type="entry name" value="S-AdoMet_synt_N"/>
</dbReference>
<dbReference type="InterPro" id="IPR002133">
    <property type="entry name" value="S-AdoMet_synthetase"/>
</dbReference>
<dbReference type="InterPro" id="IPR022636">
    <property type="entry name" value="S-AdoMet_synthetase_sfam"/>
</dbReference>
<dbReference type="NCBIfam" id="TIGR01034">
    <property type="entry name" value="metK"/>
    <property type="match status" value="1"/>
</dbReference>
<dbReference type="PANTHER" id="PTHR11964">
    <property type="entry name" value="S-ADENOSYLMETHIONINE SYNTHETASE"/>
    <property type="match status" value="1"/>
</dbReference>
<dbReference type="Pfam" id="PF02773">
    <property type="entry name" value="S-AdoMet_synt_C"/>
    <property type="match status" value="1"/>
</dbReference>
<dbReference type="Pfam" id="PF02772">
    <property type="entry name" value="S-AdoMet_synt_M"/>
    <property type="match status" value="1"/>
</dbReference>
<dbReference type="Pfam" id="PF00438">
    <property type="entry name" value="S-AdoMet_synt_N"/>
    <property type="match status" value="1"/>
</dbReference>
<dbReference type="PIRSF" id="PIRSF000497">
    <property type="entry name" value="MAT"/>
    <property type="match status" value="1"/>
</dbReference>
<dbReference type="SUPFAM" id="SSF55973">
    <property type="entry name" value="S-adenosylmethionine synthetase"/>
    <property type="match status" value="3"/>
</dbReference>
<dbReference type="PROSITE" id="PS00376">
    <property type="entry name" value="ADOMET_SYNTHASE_1"/>
    <property type="match status" value="1"/>
</dbReference>
<sequence>MILTSESVTEGHPDKLCDQISDAILDGVICKDKNARAGIETIAGNGVVHVFGEVSNPDSVDIPGIIRKTILDIGYTSEDAGIDGNTCSIQESITSQSKEIADAVNFSLEYRNQQGDLGRNSFSQQGSGDQGSVFGYACRETPEMMPLPITIAHKLAYSLAFVRKEKILPYLLPDGKSQVTLGYDSANRPKTLETVVISAQHEDSVDLDKLRFDILERVVRPVISATGLDCSKATFLINPAGRFVTGGPSADSGLTGRKIVVDTYGCAAKHGGGALSGKDPSKLDRFASYMARWVAKHVVAADFAESIEVQISYAIGKAHPVAFNIDTHGTSTIALDKLKCAILKVFDFRPAAVIDSLDLKRPIYQKTAAYGHFGRDIFTWERICPDKLNALLGAV</sequence>
<feature type="chain" id="PRO_0000174618" description="S-adenosylmethionine synthase">
    <location>
        <begin position="1"/>
        <end position="395"/>
    </location>
</feature>
<feature type="region of interest" description="Flexible loop" evidence="1">
    <location>
        <begin position="96"/>
        <end position="106"/>
    </location>
</feature>
<feature type="binding site" description="in other chain" evidence="1">
    <location>
        <position position="12"/>
    </location>
    <ligand>
        <name>ATP</name>
        <dbReference type="ChEBI" id="CHEBI:30616"/>
        <note>ligand shared between two neighboring subunits</note>
    </ligand>
</feature>
<feature type="binding site" evidence="1">
    <location>
        <position position="14"/>
    </location>
    <ligand>
        <name>Mg(2+)</name>
        <dbReference type="ChEBI" id="CHEBI:18420"/>
    </ligand>
</feature>
<feature type="binding site" evidence="1">
    <location>
        <position position="40"/>
    </location>
    <ligand>
        <name>K(+)</name>
        <dbReference type="ChEBI" id="CHEBI:29103"/>
    </ligand>
</feature>
<feature type="binding site" description="in other chain" evidence="1">
    <location>
        <position position="53"/>
    </location>
    <ligand>
        <name>L-methionine</name>
        <dbReference type="ChEBI" id="CHEBI:57844"/>
        <note>ligand shared between two neighboring subunits</note>
    </ligand>
</feature>
<feature type="binding site" description="in other chain" evidence="1">
    <location>
        <position position="96"/>
    </location>
    <ligand>
        <name>L-methionine</name>
        <dbReference type="ChEBI" id="CHEBI:57844"/>
        <note>ligand shared between two neighboring subunits</note>
    </ligand>
</feature>
<feature type="binding site" description="in other chain" evidence="1">
    <location>
        <begin position="174"/>
        <end position="176"/>
    </location>
    <ligand>
        <name>ATP</name>
        <dbReference type="ChEBI" id="CHEBI:30616"/>
        <note>ligand shared between two neighboring subunits</note>
    </ligand>
</feature>
<feature type="binding site" description="in other chain" evidence="1">
    <location>
        <begin position="242"/>
        <end position="243"/>
    </location>
    <ligand>
        <name>ATP</name>
        <dbReference type="ChEBI" id="CHEBI:30616"/>
        <note>ligand shared between two neighboring subunits</note>
    </ligand>
</feature>
<feature type="binding site" evidence="1">
    <location>
        <position position="251"/>
    </location>
    <ligand>
        <name>ATP</name>
        <dbReference type="ChEBI" id="CHEBI:30616"/>
        <note>ligand shared between two neighboring subunits</note>
    </ligand>
</feature>
<feature type="binding site" evidence="1">
    <location>
        <position position="251"/>
    </location>
    <ligand>
        <name>L-methionine</name>
        <dbReference type="ChEBI" id="CHEBI:57844"/>
        <note>ligand shared between two neighboring subunits</note>
    </ligand>
</feature>
<feature type="binding site" description="in other chain" evidence="1">
    <location>
        <begin position="257"/>
        <end position="258"/>
    </location>
    <ligand>
        <name>ATP</name>
        <dbReference type="ChEBI" id="CHEBI:30616"/>
        <note>ligand shared between two neighboring subunits</note>
    </ligand>
</feature>
<feature type="binding site" evidence="1">
    <location>
        <position position="274"/>
    </location>
    <ligand>
        <name>ATP</name>
        <dbReference type="ChEBI" id="CHEBI:30616"/>
        <note>ligand shared between two neighboring subunits</note>
    </ligand>
</feature>
<feature type="binding site" evidence="1">
    <location>
        <position position="278"/>
    </location>
    <ligand>
        <name>ATP</name>
        <dbReference type="ChEBI" id="CHEBI:30616"/>
        <note>ligand shared between two neighboring subunits</note>
    </ligand>
</feature>
<feature type="binding site" description="in other chain" evidence="1">
    <location>
        <position position="282"/>
    </location>
    <ligand>
        <name>L-methionine</name>
        <dbReference type="ChEBI" id="CHEBI:57844"/>
        <note>ligand shared between two neighboring subunits</note>
    </ligand>
</feature>
<name>METK_TROW8</name>
<proteinExistence type="inferred from homology"/>